<feature type="chain" id="PRO_0000461279" description="Dioxygenase sphC">
    <location>
        <begin position="1"/>
        <end position="363"/>
    </location>
</feature>
<feature type="binding site" evidence="2">
    <location>
        <position position="183"/>
    </location>
    <ligand>
        <name>Fe cation</name>
        <dbReference type="ChEBI" id="CHEBI:24875"/>
    </ligand>
</feature>
<feature type="binding site" evidence="2">
    <location>
        <position position="185"/>
    </location>
    <ligand>
        <name>Fe cation</name>
        <dbReference type="ChEBI" id="CHEBI:24875"/>
    </ligand>
</feature>
<feature type="binding site" evidence="2">
    <location>
        <position position="259"/>
    </location>
    <ligand>
        <name>Fe cation</name>
        <dbReference type="ChEBI" id="CHEBI:24875"/>
    </ligand>
</feature>
<protein>
    <recommendedName>
        <fullName evidence="6">Dioxygenase sphC</fullName>
        <ecNumber evidence="5">1.14.11.-</ecNumber>
    </recommendedName>
    <alternativeName>
        <fullName evidence="6">Sphingofungin biosynthesis cluster protein C</fullName>
    </alternativeName>
</protein>
<comment type="function">
    <text evidence="5">Dioxygenase; part of the gene cluster that mediates the biosynthesis of sphingofungins, bioactive molecules acting as sphingolipid inhibitors via inhibiting serine palmitoyl transferase (SPT) (PubMed:35023724). Within the pathway, sphC catalyzes the hydrolxylation at C-4 to convert sphingofungin B1 into sphingofungin B as well as presphingofungin into sphingofungin B2 (PubMed:35023724). Sphingofungin biosynthesis starts with the PKS sphB that produces an C18 polyketide precursor 3-hydroxyoctadeca-4,10-dienoyl-ACP containing one delta-6 desaturation and one delta-12 desaturation. The aminoacyl transferase sphA uses the sphB product to produce 3-keto-presphingofungin by adding an aminomalonate molecule. SphF then reduces the C-3 ketone of 3-keto-presphingofungin which leads to presphingofungin. The cytochrome P450 monooxygenase sphH converts presphingofungin into sphingofungin B1 which is further converted to sphingofungin B by the dioxygenase sphC. SphC is also able to convert presphingofungin into sphingofungin B2. The acetyltransferase sphE acetylates sphingofungin B to produce sphingofungin C, but can also convert sphingofungin B1 into sphingofungin C1 and sphingofungin B2 into sphingofungin C2. Finally, sphingofungin C can be spontaneously converted into sphingofungin D (PubMed:35023724).</text>
</comment>
<comment type="catalytic activity">
    <reaction evidence="5">
        <text>sphingofungin B1 + 2-oxoglutarate + O2 = sphingofungin B + succinate + CO2</text>
        <dbReference type="Rhea" id="RHEA:81167"/>
        <dbReference type="ChEBI" id="CHEBI:15379"/>
        <dbReference type="ChEBI" id="CHEBI:16526"/>
        <dbReference type="ChEBI" id="CHEBI:16810"/>
        <dbReference type="ChEBI" id="CHEBI:30031"/>
        <dbReference type="ChEBI" id="CHEBI:231806"/>
        <dbReference type="ChEBI" id="CHEBI:231807"/>
    </reaction>
    <physiologicalReaction direction="left-to-right" evidence="5">
        <dbReference type="Rhea" id="RHEA:81168"/>
    </physiologicalReaction>
</comment>
<comment type="cofactor">
    <cofactor evidence="1">
        <name>Fe cation</name>
        <dbReference type="ChEBI" id="CHEBI:24875"/>
    </cofactor>
</comment>
<comment type="pathway">
    <text evidence="5">Secondary metabolite biosynthesis.</text>
</comment>
<comment type="subunit">
    <text evidence="3">Homodimer.</text>
</comment>
<comment type="induction">
    <text evidence="5">Expression is positively regulated by the sphingofungins biosynthesis cluster-specific transcription factor sphG.</text>
</comment>
<comment type="disruption phenotype">
    <text evidence="5">Leads to the production of derivatives lacking the C-4 hydroxyl group.</text>
</comment>
<comment type="biotechnology">
    <text evidence="4">The sphingofungins A, B, C, and D, show a limited antifungal spectrum of activity but are especially effective against Cryptococcus species, fungal pathogens causing opportunistic infections in human.</text>
</comment>
<comment type="similarity">
    <text evidence="7">Belongs to the PhyH family.</text>
</comment>
<sequence length="363" mass="40853">MRPPIHKLICKRLADQSSHHSQHLYHQYIVRNLPAVLQMWRIPTDVPQVAVPIGLKLAEVTADTPLDEVFKHWKESGGVILKNILTPAEAHQITTELESRIDSVQRGSRVPHEDLAAFHGAKTKRAGDLINHSATFRERILENDFIHAICQRCFGEDGHNGDYWLSAATTLNASGPQPAQVLHRDLTSYPPYALLGPEGTEPQINFLFAFSDFTDDNGATRIIPGSNKWPFHQRGNMAQTIPAEMKTGDCLLIGGKVIHAMGENKTETERKCIQLTVIPSFLTPAEAHPFIIKLETVKKLSKRAQRFVGFRSQYPRGSPGLWTKDYIELALHLGLDDLQGAMEDLQHVLNQPKQWDTIDYDKM</sequence>
<proteinExistence type="evidence at protein level"/>
<evidence type="ECO:0000250" key="1">
    <source>
        <dbReference type="UniProtKB" id="A0A097ZPD9"/>
    </source>
</evidence>
<evidence type="ECO:0000250" key="2">
    <source>
        <dbReference type="UniProtKB" id="O14832"/>
    </source>
</evidence>
<evidence type="ECO:0000250" key="3">
    <source>
        <dbReference type="UniProtKB" id="Q4WAW9"/>
    </source>
</evidence>
<evidence type="ECO:0000269" key="4">
    <source>
    </source>
</evidence>
<evidence type="ECO:0000269" key="5">
    <source>
    </source>
</evidence>
<evidence type="ECO:0000303" key="6">
    <source>
    </source>
</evidence>
<evidence type="ECO:0000305" key="7"/>
<accession>B0XZV5</accession>
<keyword id="KW-0223">Dioxygenase</keyword>
<keyword id="KW-0408">Iron</keyword>
<keyword id="KW-0479">Metal-binding</keyword>
<keyword id="KW-0560">Oxidoreductase</keyword>
<name>SPHC_ASPFC</name>
<reference key="1">
    <citation type="journal article" date="2008" name="PLoS Genet.">
        <title>Genomic islands in the pathogenic filamentous fungus Aspergillus fumigatus.</title>
        <authorList>
            <person name="Fedorova N.D."/>
            <person name="Khaldi N."/>
            <person name="Joardar V.S."/>
            <person name="Maiti R."/>
            <person name="Amedeo P."/>
            <person name="Anderson M.J."/>
            <person name="Crabtree J."/>
            <person name="Silva J.C."/>
            <person name="Badger J.H."/>
            <person name="Albarraq A."/>
            <person name="Angiuoli S."/>
            <person name="Bussey H."/>
            <person name="Bowyer P."/>
            <person name="Cotty P.J."/>
            <person name="Dyer P.S."/>
            <person name="Egan A."/>
            <person name="Galens K."/>
            <person name="Fraser-Liggett C.M."/>
            <person name="Haas B.J."/>
            <person name="Inman J.M."/>
            <person name="Kent R."/>
            <person name="Lemieux S."/>
            <person name="Malavazi I."/>
            <person name="Orvis J."/>
            <person name="Roemer T."/>
            <person name="Ronning C.M."/>
            <person name="Sundaram J.P."/>
            <person name="Sutton G."/>
            <person name="Turner G."/>
            <person name="Venter J.C."/>
            <person name="White O.R."/>
            <person name="Whitty B.R."/>
            <person name="Youngman P."/>
            <person name="Wolfe K.H."/>
            <person name="Goldman G.H."/>
            <person name="Wortman J.R."/>
            <person name="Jiang B."/>
            <person name="Denning D.W."/>
            <person name="Nierman W.C."/>
        </authorList>
    </citation>
    <scope>NUCLEOTIDE SEQUENCE [LARGE SCALE GENOMIC DNA]</scope>
    <source>
        <strain>CBS 144.89 / FGSC A1163 / CEA10</strain>
    </source>
</reference>
<reference key="2">
    <citation type="journal article" date="1992" name="J. Antibiot.">
        <title>Sphingofungins A, B, C, and D; a new family of antifungal agents. I. Fermentation, isolation, and biological activity.</title>
        <authorList>
            <person name="VanMiddlesworth F."/>
            <person name="Giacobbe R.A."/>
            <person name="Lopez M."/>
            <person name="Garrity G."/>
            <person name="Bland J.A."/>
            <person name="Bartizal K."/>
            <person name="Fromtling R.A."/>
            <person name="Polishook J."/>
            <person name="Zweerink M."/>
            <person name="Edison A.M."/>
        </authorList>
    </citation>
    <scope>BIOTECHNOLOGY</scope>
</reference>
<reference key="3">
    <citation type="journal article" date="2022" name="ACS Chem. Biol.">
        <title>Biosynthesis of the sphingolipid inhibitors sphingofungins in filamentous fungi requires aminomalonate as a metabolic precursor.</title>
        <authorList>
            <person name="Bissell A.U."/>
            <person name="Rautschek J."/>
            <person name="Hoefgen S."/>
            <person name="Raguz L."/>
            <person name="Mattern D.J."/>
            <person name="Saeed N."/>
            <person name="Janevska S."/>
            <person name="Jojic K."/>
            <person name="Huang Y."/>
            <person name="Kufs J.E."/>
            <person name="Herboeck B."/>
            <person name="Guo H."/>
            <person name="Hillmann F."/>
            <person name="Beemelmanns C."/>
            <person name="Valiante V."/>
        </authorList>
    </citation>
    <scope>FUNCTION</scope>
    <scope>INDUCTION</scope>
    <scope>CATALYTIC ACTIVITY</scope>
    <scope>DISRUPTION PHENOTYPE</scope>
    <scope>PATHWAY</scope>
</reference>
<dbReference type="EC" id="1.14.11.-" evidence="5"/>
<dbReference type="EMBL" id="DS499596">
    <property type="protein sequence ID" value="EDP52287.1"/>
    <property type="molecule type" value="Genomic_DNA"/>
</dbReference>
<dbReference type="SMR" id="B0XZV5"/>
<dbReference type="EnsemblFungi" id="EDP52287">
    <property type="protein sequence ID" value="EDP52287"/>
    <property type="gene ID" value="AFUB_034510"/>
</dbReference>
<dbReference type="VEuPathDB" id="FungiDB:AFUB_034510"/>
<dbReference type="HOGENOM" id="CLU_047725_1_0_1"/>
<dbReference type="OrthoDB" id="45036at5052"/>
<dbReference type="PhylomeDB" id="B0XZV5"/>
<dbReference type="Proteomes" id="UP000001699">
    <property type="component" value="Unassembled WGS sequence"/>
</dbReference>
<dbReference type="GO" id="GO:0051213">
    <property type="term" value="F:dioxygenase activity"/>
    <property type="evidence" value="ECO:0007669"/>
    <property type="project" value="UniProtKB-KW"/>
</dbReference>
<dbReference type="GO" id="GO:0046872">
    <property type="term" value="F:metal ion binding"/>
    <property type="evidence" value="ECO:0007669"/>
    <property type="project" value="UniProtKB-KW"/>
</dbReference>
<dbReference type="GO" id="GO:0009058">
    <property type="term" value="P:biosynthetic process"/>
    <property type="evidence" value="ECO:0007669"/>
    <property type="project" value="UniProtKB-ARBA"/>
</dbReference>
<dbReference type="Gene3D" id="2.60.120.620">
    <property type="entry name" value="q2cbj1_9rhob like domain"/>
    <property type="match status" value="1"/>
</dbReference>
<dbReference type="InterPro" id="IPR008775">
    <property type="entry name" value="Phytyl_CoA_dOase-like"/>
</dbReference>
<dbReference type="PANTHER" id="PTHR20883:SF19">
    <property type="entry name" value="MULTIFUNCTIONAL DIOXYGENASE AUSE"/>
    <property type="match status" value="1"/>
</dbReference>
<dbReference type="PANTHER" id="PTHR20883">
    <property type="entry name" value="PHYTANOYL-COA DIOXYGENASE DOMAIN CONTAINING 1"/>
    <property type="match status" value="1"/>
</dbReference>
<dbReference type="Pfam" id="PF05721">
    <property type="entry name" value="PhyH"/>
    <property type="match status" value="1"/>
</dbReference>
<dbReference type="SUPFAM" id="SSF51197">
    <property type="entry name" value="Clavaminate synthase-like"/>
    <property type="match status" value="1"/>
</dbReference>
<organism>
    <name type="scientific">Aspergillus fumigatus (strain CBS 144.89 / FGSC A1163 / CEA10)</name>
    <name type="common">Neosartorya fumigata</name>
    <dbReference type="NCBI Taxonomy" id="451804"/>
    <lineage>
        <taxon>Eukaryota</taxon>
        <taxon>Fungi</taxon>
        <taxon>Dikarya</taxon>
        <taxon>Ascomycota</taxon>
        <taxon>Pezizomycotina</taxon>
        <taxon>Eurotiomycetes</taxon>
        <taxon>Eurotiomycetidae</taxon>
        <taxon>Eurotiales</taxon>
        <taxon>Aspergillaceae</taxon>
        <taxon>Aspergillus</taxon>
        <taxon>Aspergillus subgen. Fumigati</taxon>
    </lineage>
</organism>
<gene>
    <name evidence="6" type="primary">sphC</name>
    <name type="ORF">AFUB_034510</name>
</gene>